<protein>
    <recommendedName>
        <fullName evidence="1">Integration host factor subunit alpha</fullName>
        <shortName evidence="1">IHF-alpha</shortName>
    </recommendedName>
</protein>
<proteinExistence type="inferred from homology"/>
<accession>Q7NYC0</accession>
<keyword id="KW-0233">DNA recombination</keyword>
<keyword id="KW-0238">DNA-binding</keyword>
<keyword id="KW-1185">Reference proteome</keyword>
<keyword id="KW-0804">Transcription</keyword>
<keyword id="KW-0805">Transcription regulation</keyword>
<keyword id="KW-0810">Translation regulation</keyword>
<reference key="1">
    <citation type="journal article" date="2003" name="Proc. Natl. Acad. Sci. U.S.A.">
        <title>The complete genome sequence of Chromobacterium violaceum reveals remarkable and exploitable bacterial adaptability.</title>
        <authorList>
            <person name="Vasconcelos A.T.R."/>
            <person name="de Almeida D.F."/>
            <person name="Hungria M."/>
            <person name="Guimaraes C.T."/>
            <person name="Antonio R.V."/>
            <person name="Almeida F.C."/>
            <person name="de Almeida L.G.P."/>
            <person name="de Almeida R."/>
            <person name="Alves-Gomes J.A."/>
            <person name="Andrade E.M."/>
            <person name="Araripe J."/>
            <person name="de Araujo M.F.F."/>
            <person name="Astolfi-Filho S."/>
            <person name="Azevedo V."/>
            <person name="Baptista A.J."/>
            <person name="Bataus L.A.M."/>
            <person name="Batista J.S."/>
            <person name="Belo A."/>
            <person name="van den Berg C."/>
            <person name="Bogo M."/>
            <person name="Bonatto S."/>
            <person name="Bordignon J."/>
            <person name="Brigido M.M."/>
            <person name="Brito C.A."/>
            <person name="Brocchi M."/>
            <person name="Burity H.A."/>
            <person name="Camargo A.A."/>
            <person name="Cardoso D.D.P."/>
            <person name="Carneiro N.P."/>
            <person name="Carraro D.M."/>
            <person name="Carvalho C.M.B."/>
            <person name="Cascardo J.C.M."/>
            <person name="Cavada B.S."/>
            <person name="Chueire L.M.O."/>
            <person name="Creczynski-Pasa T.B."/>
            <person name="Cunha-Junior N.C."/>
            <person name="Fagundes N."/>
            <person name="Falcao C.L."/>
            <person name="Fantinatti F."/>
            <person name="Farias I.P."/>
            <person name="Felipe M.S.S."/>
            <person name="Ferrari L.P."/>
            <person name="Ferro J.A."/>
            <person name="Ferro M.I.T."/>
            <person name="Franco G.R."/>
            <person name="Freitas N.S.A."/>
            <person name="Furlan L.R."/>
            <person name="Gazzinelli R.T."/>
            <person name="Gomes E.A."/>
            <person name="Goncalves P.R."/>
            <person name="Grangeiro T.B."/>
            <person name="Grattapaglia D."/>
            <person name="Grisard E.C."/>
            <person name="Hanna E.S."/>
            <person name="Jardim S.N."/>
            <person name="Laurino J."/>
            <person name="Leoi L.C.T."/>
            <person name="Lima L.F.A."/>
            <person name="Loureiro M.F."/>
            <person name="Lyra M.C.C.P."/>
            <person name="Madeira H.M.F."/>
            <person name="Manfio G.P."/>
            <person name="Maranhao A.Q."/>
            <person name="Martins W.S."/>
            <person name="di Mauro S.M.Z."/>
            <person name="de Medeiros S.R.B."/>
            <person name="Meissner R.V."/>
            <person name="Moreira M.A.M."/>
            <person name="Nascimento F.F."/>
            <person name="Nicolas M.F."/>
            <person name="Oliveira J.G."/>
            <person name="Oliveira S.C."/>
            <person name="Paixao R.F.C."/>
            <person name="Parente J.A."/>
            <person name="Pedrosa F.O."/>
            <person name="Pena S.D.J."/>
            <person name="Pereira J.O."/>
            <person name="Pereira M."/>
            <person name="Pinto L.S.R.C."/>
            <person name="Pinto L.S."/>
            <person name="Porto J.I.R."/>
            <person name="Potrich D.P."/>
            <person name="Ramalho-Neto C.E."/>
            <person name="Reis A.M.M."/>
            <person name="Rigo L.U."/>
            <person name="Rondinelli E."/>
            <person name="Santos E.B.P."/>
            <person name="Santos F.R."/>
            <person name="Schneider M.P.C."/>
            <person name="Seuanez H.N."/>
            <person name="Silva A.M.R."/>
            <person name="da Silva A.L.C."/>
            <person name="Silva D.W."/>
            <person name="Silva R."/>
            <person name="Simoes I.C."/>
            <person name="Simon D."/>
            <person name="Soares C.M.A."/>
            <person name="Soares R.B.A."/>
            <person name="Souza E.M."/>
            <person name="Souza K.R.L."/>
            <person name="Souza R.C."/>
            <person name="Steffens M.B.R."/>
            <person name="Steindel M."/>
            <person name="Teixeira S.R."/>
            <person name="Urmenyi T."/>
            <person name="Vettore A."/>
            <person name="Wassem R."/>
            <person name="Zaha A."/>
            <person name="Simpson A.J.G."/>
        </authorList>
    </citation>
    <scope>NUCLEOTIDE SEQUENCE [LARGE SCALE GENOMIC DNA]</scope>
    <source>
        <strain>ATCC 12472 / DSM 30191 / JCM 1249 / CCUG 213 / NBRC 12614 / NCIMB 9131 / NCTC 9757 / MK</strain>
    </source>
</reference>
<gene>
    <name evidence="1" type="primary">ihfA</name>
    <name evidence="1" type="synonym">himA</name>
    <name type="ordered locus">CV_1354</name>
</gene>
<dbReference type="EMBL" id="AE016825">
    <property type="protein sequence ID" value="AAQ59029.1"/>
    <property type="molecule type" value="Genomic_DNA"/>
</dbReference>
<dbReference type="RefSeq" id="WP_011134908.1">
    <property type="nucleotide sequence ID" value="NC_005085.1"/>
</dbReference>
<dbReference type="SMR" id="Q7NYC0"/>
<dbReference type="STRING" id="243365.CV_1354"/>
<dbReference type="KEGG" id="cvi:CV_1354"/>
<dbReference type="eggNOG" id="COG0776">
    <property type="taxonomic scope" value="Bacteria"/>
</dbReference>
<dbReference type="HOGENOM" id="CLU_105066_1_3_4"/>
<dbReference type="OrthoDB" id="9797747at2"/>
<dbReference type="Proteomes" id="UP000001424">
    <property type="component" value="Chromosome"/>
</dbReference>
<dbReference type="GO" id="GO:0005829">
    <property type="term" value="C:cytosol"/>
    <property type="evidence" value="ECO:0007669"/>
    <property type="project" value="TreeGrafter"/>
</dbReference>
<dbReference type="GO" id="GO:0003677">
    <property type="term" value="F:DNA binding"/>
    <property type="evidence" value="ECO:0007669"/>
    <property type="project" value="UniProtKB-UniRule"/>
</dbReference>
<dbReference type="GO" id="GO:0030527">
    <property type="term" value="F:structural constituent of chromatin"/>
    <property type="evidence" value="ECO:0007669"/>
    <property type="project" value="InterPro"/>
</dbReference>
<dbReference type="GO" id="GO:0006310">
    <property type="term" value="P:DNA recombination"/>
    <property type="evidence" value="ECO:0007669"/>
    <property type="project" value="UniProtKB-UniRule"/>
</dbReference>
<dbReference type="GO" id="GO:0009893">
    <property type="term" value="P:positive regulation of metabolic process"/>
    <property type="evidence" value="ECO:0007669"/>
    <property type="project" value="UniProtKB-ARBA"/>
</dbReference>
<dbReference type="GO" id="GO:0006355">
    <property type="term" value="P:regulation of DNA-templated transcription"/>
    <property type="evidence" value="ECO:0007669"/>
    <property type="project" value="UniProtKB-UniRule"/>
</dbReference>
<dbReference type="GO" id="GO:0006417">
    <property type="term" value="P:regulation of translation"/>
    <property type="evidence" value="ECO:0007669"/>
    <property type="project" value="UniProtKB-UniRule"/>
</dbReference>
<dbReference type="CDD" id="cd13835">
    <property type="entry name" value="IHF_A"/>
    <property type="match status" value="1"/>
</dbReference>
<dbReference type="FunFam" id="4.10.520.10:FF:000002">
    <property type="entry name" value="Integration host factor subunit alpha"/>
    <property type="match status" value="1"/>
</dbReference>
<dbReference type="Gene3D" id="4.10.520.10">
    <property type="entry name" value="IHF-like DNA-binding proteins"/>
    <property type="match status" value="1"/>
</dbReference>
<dbReference type="HAMAP" id="MF_00380">
    <property type="entry name" value="IHF_alpha"/>
    <property type="match status" value="1"/>
</dbReference>
<dbReference type="InterPro" id="IPR000119">
    <property type="entry name" value="Hist_DNA-bd"/>
</dbReference>
<dbReference type="InterPro" id="IPR020816">
    <property type="entry name" value="Histone-like_DNA-bd_CS"/>
</dbReference>
<dbReference type="InterPro" id="IPR010992">
    <property type="entry name" value="IHF-like_DNA-bd_dom_sf"/>
</dbReference>
<dbReference type="InterPro" id="IPR005684">
    <property type="entry name" value="IHF_alpha"/>
</dbReference>
<dbReference type="NCBIfam" id="TIGR00987">
    <property type="entry name" value="himA"/>
    <property type="match status" value="1"/>
</dbReference>
<dbReference type="NCBIfam" id="NF001401">
    <property type="entry name" value="PRK00285.1"/>
    <property type="match status" value="1"/>
</dbReference>
<dbReference type="PANTHER" id="PTHR33175">
    <property type="entry name" value="DNA-BINDING PROTEIN HU"/>
    <property type="match status" value="1"/>
</dbReference>
<dbReference type="PANTHER" id="PTHR33175:SF2">
    <property type="entry name" value="INTEGRATION HOST FACTOR SUBUNIT ALPHA"/>
    <property type="match status" value="1"/>
</dbReference>
<dbReference type="Pfam" id="PF00216">
    <property type="entry name" value="Bac_DNA_binding"/>
    <property type="match status" value="1"/>
</dbReference>
<dbReference type="PRINTS" id="PR01727">
    <property type="entry name" value="DNABINDINGHU"/>
</dbReference>
<dbReference type="SMART" id="SM00411">
    <property type="entry name" value="BHL"/>
    <property type="match status" value="1"/>
</dbReference>
<dbReference type="SUPFAM" id="SSF47729">
    <property type="entry name" value="IHF-like DNA-binding proteins"/>
    <property type="match status" value="1"/>
</dbReference>
<dbReference type="PROSITE" id="PS00045">
    <property type="entry name" value="HISTONE_LIKE"/>
    <property type="match status" value="1"/>
</dbReference>
<evidence type="ECO:0000255" key="1">
    <source>
        <dbReference type="HAMAP-Rule" id="MF_00380"/>
    </source>
</evidence>
<evidence type="ECO:0000256" key="2">
    <source>
        <dbReference type="SAM" id="MobiDB-lite"/>
    </source>
</evidence>
<organism>
    <name type="scientific">Chromobacterium violaceum (strain ATCC 12472 / DSM 30191 / JCM 1249 / CCUG 213 / NBRC 12614 / NCIMB 9131 / NCTC 9757 / MK)</name>
    <dbReference type="NCBI Taxonomy" id="243365"/>
    <lineage>
        <taxon>Bacteria</taxon>
        <taxon>Pseudomonadati</taxon>
        <taxon>Pseudomonadota</taxon>
        <taxon>Betaproteobacteria</taxon>
        <taxon>Neisseriales</taxon>
        <taxon>Chromobacteriaceae</taxon>
        <taxon>Chromobacterium</taxon>
    </lineage>
</organism>
<feature type="chain" id="PRO_0000277722" description="Integration host factor subunit alpha">
    <location>
        <begin position="1"/>
        <end position="100"/>
    </location>
</feature>
<feature type="region of interest" description="Disordered" evidence="2">
    <location>
        <begin position="50"/>
        <end position="70"/>
    </location>
</feature>
<sequence>MTLTKAELADLLFDQVGLNKREAKDMVESFFEEIRLALESGDSVKLSGFGNFQLRDKPQRPGRNPKTGEEIPITARRVVTFHASQKLKGMVEQYHANKQG</sequence>
<comment type="function">
    <text evidence="1">This protein is one of the two subunits of integration host factor, a specific DNA-binding protein that functions in genetic recombination as well as in transcriptional and translational control.</text>
</comment>
<comment type="subunit">
    <text evidence="1">Heterodimer of an alpha and a beta chain.</text>
</comment>
<comment type="similarity">
    <text evidence="1">Belongs to the bacterial histone-like protein family.</text>
</comment>
<name>IHFA_CHRVO</name>